<keyword id="KW-0687">Ribonucleoprotein</keyword>
<keyword id="KW-0689">Ribosomal protein</keyword>
<reference key="1">
    <citation type="journal article" date="2009" name="PLoS Genet.">
        <title>Organised genome dynamics in the Escherichia coli species results in highly diverse adaptive paths.</title>
        <authorList>
            <person name="Touchon M."/>
            <person name="Hoede C."/>
            <person name="Tenaillon O."/>
            <person name="Barbe V."/>
            <person name="Baeriswyl S."/>
            <person name="Bidet P."/>
            <person name="Bingen E."/>
            <person name="Bonacorsi S."/>
            <person name="Bouchier C."/>
            <person name="Bouvet O."/>
            <person name="Calteau A."/>
            <person name="Chiapello H."/>
            <person name="Clermont O."/>
            <person name="Cruveiller S."/>
            <person name="Danchin A."/>
            <person name="Diard M."/>
            <person name="Dossat C."/>
            <person name="Karoui M.E."/>
            <person name="Frapy E."/>
            <person name="Garry L."/>
            <person name="Ghigo J.M."/>
            <person name="Gilles A.M."/>
            <person name="Johnson J."/>
            <person name="Le Bouguenec C."/>
            <person name="Lescat M."/>
            <person name="Mangenot S."/>
            <person name="Martinez-Jehanne V."/>
            <person name="Matic I."/>
            <person name="Nassif X."/>
            <person name="Oztas S."/>
            <person name="Petit M.A."/>
            <person name="Pichon C."/>
            <person name="Rouy Z."/>
            <person name="Ruf C.S."/>
            <person name="Schneider D."/>
            <person name="Tourret J."/>
            <person name="Vacherie B."/>
            <person name="Vallenet D."/>
            <person name="Medigue C."/>
            <person name="Rocha E.P.C."/>
            <person name="Denamur E."/>
        </authorList>
    </citation>
    <scope>NUCLEOTIDE SEQUENCE [LARGE SCALE GENOMIC DNA]</scope>
    <source>
        <strain>ED1a</strain>
    </source>
</reference>
<feature type="chain" id="PRO_1000195976" description="Large ribosomal subunit protein bL32">
    <location>
        <begin position="1"/>
        <end position="57"/>
    </location>
</feature>
<feature type="region of interest" description="Disordered" evidence="2">
    <location>
        <begin position="1"/>
        <end position="38"/>
    </location>
</feature>
<accession>B7MTL9</accession>
<gene>
    <name evidence="1" type="primary">rpmF</name>
    <name type="ordered locus">ECED1_1232</name>
</gene>
<evidence type="ECO:0000255" key="1">
    <source>
        <dbReference type="HAMAP-Rule" id="MF_00340"/>
    </source>
</evidence>
<evidence type="ECO:0000256" key="2">
    <source>
        <dbReference type="SAM" id="MobiDB-lite"/>
    </source>
</evidence>
<evidence type="ECO:0000305" key="3"/>
<protein>
    <recommendedName>
        <fullName evidence="1">Large ribosomal subunit protein bL32</fullName>
    </recommendedName>
    <alternativeName>
        <fullName evidence="3">50S ribosomal protein L32</fullName>
    </alternativeName>
</protein>
<sequence>MAVQQNKPTRSKRGMRRSHDALTAVTSLSVDKTSGEKHLRHHITADGYYRGRKVIAK</sequence>
<name>RL32_ECO81</name>
<organism>
    <name type="scientific">Escherichia coli O81 (strain ED1a)</name>
    <dbReference type="NCBI Taxonomy" id="585397"/>
    <lineage>
        <taxon>Bacteria</taxon>
        <taxon>Pseudomonadati</taxon>
        <taxon>Pseudomonadota</taxon>
        <taxon>Gammaproteobacteria</taxon>
        <taxon>Enterobacterales</taxon>
        <taxon>Enterobacteriaceae</taxon>
        <taxon>Escherichia</taxon>
    </lineage>
</organism>
<dbReference type="EMBL" id="CU928162">
    <property type="protein sequence ID" value="CAR07433.1"/>
    <property type="molecule type" value="Genomic_DNA"/>
</dbReference>
<dbReference type="RefSeq" id="WP_000290727.1">
    <property type="nucleotide sequence ID" value="NC_011745.1"/>
</dbReference>
<dbReference type="SMR" id="B7MTL9"/>
<dbReference type="GeneID" id="93776319"/>
<dbReference type="KEGG" id="ecq:ECED1_1232"/>
<dbReference type="HOGENOM" id="CLU_129084_2_1_6"/>
<dbReference type="Proteomes" id="UP000000748">
    <property type="component" value="Chromosome"/>
</dbReference>
<dbReference type="GO" id="GO:0015934">
    <property type="term" value="C:large ribosomal subunit"/>
    <property type="evidence" value="ECO:0007669"/>
    <property type="project" value="InterPro"/>
</dbReference>
<dbReference type="GO" id="GO:0003735">
    <property type="term" value="F:structural constituent of ribosome"/>
    <property type="evidence" value="ECO:0007669"/>
    <property type="project" value="InterPro"/>
</dbReference>
<dbReference type="GO" id="GO:0006412">
    <property type="term" value="P:translation"/>
    <property type="evidence" value="ECO:0007669"/>
    <property type="project" value="UniProtKB-UniRule"/>
</dbReference>
<dbReference type="HAMAP" id="MF_00340">
    <property type="entry name" value="Ribosomal_bL32"/>
    <property type="match status" value="1"/>
</dbReference>
<dbReference type="InterPro" id="IPR002677">
    <property type="entry name" value="Ribosomal_bL32"/>
</dbReference>
<dbReference type="InterPro" id="IPR044957">
    <property type="entry name" value="Ribosomal_bL32_bact"/>
</dbReference>
<dbReference type="InterPro" id="IPR011332">
    <property type="entry name" value="Ribosomal_zn-bd"/>
</dbReference>
<dbReference type="NCBIfam" id="TIGR01031">
    <property type="entry name" value="rpmF_bact"/>
    <property type="match status" value="1"/>
</dbReference>
<dbReference type="PANTHER" id="PTHR35534">
    <property type="entry name" value="50S RIBOSOMAL PROTEIN L32"/>
    <property type="match status" value="1"/>
</dbReference>
<dbReference type="PANTHER" id="PTHR35534:SF1">
    <property type="entry name" value="LARGE RIBOSOMAL SUBUNIT PROTEIN BL32"/>
    <property type="match status" value="1"/>
</dbReference>
<dbReference type="Pfam" id="PF01783">
    <property type="entry name" value="Ribosomal_L32p"/>
    <property type="match status" value="1"/>
</dbReference>
<dbReference type="SUPFAM" id="SSF57829">
    <property type="entry name" value="Zn-binding ribosomal proteins"/>
    <property type="match status" value="1"/>
</dbReference>
<proteinExistence type="inferred from homology"/>
<comment type="similarity">
    <text evidence="1">Belongs to the bacterial ribosomal protein bL32 family.</text>
</comment>